<gene>
    <name evidence="1" type="primary">flpA</name>
    <name type="ordered locus">HQ_2567A</name>
</gene>
<evidence type="ECO:0000255" key="1">
    <source>
        <dbReference type="HAMAP-Rule" id="MF_00351"/>
    </source>
</evidence>
<evidence type="ECO:0000256" key="2">
    <source>
        <dbReference type="SAM" id="MobiDB-lite"/>
    </source>
</evidence>
<accession>Q18H64</accession>
<feature type="chain" id="PRO_0000389602" description="Fibrillarin-like rRNA/tRNA 2'-O-methyltransferase">
    <location>
        <begin position="1"/>
        <end position="215"/>
    </location>
</feature>
<feature type="region of interest" description="Disordered" evidence="2">
    <location>
        <begin position="1"/>
        <end position="29"/>
    </location>
</feature>
<feature type="compositionally biased region" description="Basic and acidic residues" evidence="2">
    <location>
        <begin position="11"/>
        <end position="20"/>
    </location>
</feature>
<feature type="binding site" evidence="1">
    <location>
        <begin position="76"/>
        <end position="77"/>
    </location>
    <ligand>
        <name>S-adenosyl-L-methionine</name>
        <dbReference type="ChEBI" id="CHEBI:59789"/>
    </ligand>
</feature>
<feature type="binding site" evidence="1">
    <location>
        <begin position="92"/>
        <end position="93"/>
    </location>
    <ligand>
        <name>S-adenosyl-L-methionine</name>
        <dbReference type="ChEBI" id="CHEBI:59789"/>
    </ligand>
</feature>
<feature type="binding site" evidence="1">
    <location>
        <begin position="117"/>
        <end position="118"/>
    </location>
    <ligand>
        <name>S-adenosyl-L-methionine</name>
        <dbReference type="ChEBI" id="CHEBI:59789"/>
    </ligand>
</feature>
<feature type="binding site" evidence="1">
    <location>
        <begin position="138"/>
        <end position="141"/>
    </location>
    <ligand>
        <name>S-adenosyl-L-methionine</name>
        <dbReference type="ChEBI" id="CHEBI:59789"/>
    </ligand>
</feature>
<comment type="function">
    <text evidence="1">Involved in pre-rRNA and tRNA processing. Utilizes the methyl donor S-adenosyl-L-methionine to catalyze the site-specific 2'-hydroxyl methylation of ribose moieties in rRNA and tRNA. Site specificity is provided by a guide RNA that base pairs with the substrate. Methylation occurs at a characteristic distance from the sequence involved in base pairing with the guide RNA.</text>
</comment>
<comment type="subunit">
    <text evidence="1">Interacts with nop5. Component of box C/D small ribonucleoprotein (sRNP) particles that contain rpl7ae, FlpA and nop5, plus a guide RNA.</text>
</comment>
<comment type="similarity">
    <text evidence="1">Belongs to the methyltransferase superfamily. Fibrillarin family.</text>
</comment>
<protein>
    <recommendedName>
        <fullName evidence="1">Fibrillarin-like rRNA/tRNA 2'-O-methyltransferase</fullName>
        <ecNumber evidence="1">2.1.1.-</ecNumber>
    </recommendedName>
</protein>
<dbReference type="EC" id="2.1.1.-" evidence="1"/>
<dbReference type="EMBL" id="AM180088">
    <property type="protein sequence ID" value="CAJ52679.1"/>
    <property type="molecule type" value="Genomic_DNA"/>
</dbReference>
<dbReference type="RefSeq" id="WP_011571797.1">
    <property type="nucleotide sequence ID" value="NC_008212.1"/>
</dbReference>
<dbReference type="SMR" id="Q18H64"/>
<dbReference type="STRING" id="362976.HQ_2567A"/>
<dbReference type="GeneID" id="4193988"/>
<dbReference type="KEGG" id="hwa:HQ_2567A"/>
<dbReference type="eggNOG" id="arCOG00078">
    <property type="taxonomic scope" value="Archaea"/>
</dbReference>
<dbReference type="HOGENOM" id="CLU_059055_2_0_2"/>
<dbReference type="Proteomes" id="UP000001975">
    <property type="component" value="Chromosome"/>
</dbReference>
<dbReference type="GO" id="GO:1990259">
    <property type="term" value="F:histone H2AQ104 methyltransferase activity"/>
    <property type="evidence" value="ECO:0007669"/>
    <property type="project" value="TreeGrafter"/>
</dbReference>
<dbReference type="GO" id="GO:0003723">
    <property type="term" value="F:RNA binding"/>
    <property type="evidence" value="ECO:0007669"/>
    <property type="project" value="UniProtKB-UniRule"/>
</dbReference>
<dbReference type="GO" id="GO:0008649">
    <property type="term" value="F:rRNA methyltransferase activity"/>
    <property type="evidence" value="ECO:0007669"/>
    <property type="project" value="TreeGrafter"/>
</dbReference>
<dbReference type="GO" id="GO:0000494">
    <property type="term" value="P:box C/D sno(s)RNA 3'-end processing"/>
    <property type="evidence" value="ECO:0007669"/>
    <property type="project" value="TreeGrafter"/>
</dbReference>
<dbReference type="GO" id="GO:0008033">
    <property type="term" value="P:tRNA processing"/>
    <property type="evidence" value="ECO:0007669"/>
    <property type="project" value="UniProtKB-UniRule"/>
</dbReference>
<dbReference type="Gene3D" id="3.40.50.150">
    <property type="entry name" value="Vaccinia Virus protein VP39"/>
    <property type="match status" value="1"/>
</dbReference>
<dbReference type="HAMAP" id="MF_00351">
    <property type="entry name" value="RNA_methyltransf_FlpA"/>
    <property type="match status" value="1"/>
</dbReference>
<dbReference type="InterPro" id="IPR000692">
    <property type="entry name" value="Fibrillarin"/>
</dbReference>
<dbReference type="InterPro" id="IPR020813">
    <property type="entry name" value="Fibrillarin_CS"/>
</dbReference>
<dbReference type="InterPro" id="IPR029063">
    <property type="entry name" value="SAM-dependent_MTases_sf"/>
</dbReference>
<dbReference type="NCBIfam" id="NF003276">
    <property type="entry name" value="PRK04266.1-2"/>
    <property type="match status" value="1"/>
</dbReference>
<dbReference type="NCBIfam" id="NF003278">
    <property type="entry name" value="PRK04266.1-4"/>
    <property type="match status" value="1"/>
</dbReference>
<dbReference type="PANTHER" id="PTHR10335:SF17">
    <property type="entry name" value="FIBRILLARIN"/>
    <property type="match status" value="1"/>
</dbReference>
<dbReference type="PANTHER" id="PTHR10335">
    <property type="entry name" value="RRNA 2-O-METHYLTRANSFERASE FIBRILLARIN"/>
    <property type="match status" value="1"/>
</dbReference>
<dbReference type="Pfam" id="PF01269">
    <property type="entry name" value="Fibrillarin"/>
    <property type="match status" value="1"/>
</dbReference>
<dbReference type="PRINTS" id="PR00052">
    <property type="entry name" value="FIBRILLARIN"/>
</dbReference>
<dbReference type="SMART" id="SM01206">
    <property type="entry name" value="Fibrillarin"/>
    <property type="match status" value="1"/>
</dbReference>
<dbReference type="SUPFAM" id="SSF53335">
    <property type="entry name" value="S-adenosyl-L-methionine-dependent methyltransferases"/>
    <property type="match status" value="1"/>
</dbReference>
<dbReference type="PROSITE" id="PS00566">
    <property type="entry name" value="FIBRILLARIN"/>
    <property type="match status" value="1"/>
</dbReference>
<sequence length="215" mass="23900">MKASSSLPDGVQRRQFDNRSRLTTHGTTVYGEPRDTDGWRLWDAGRSKLGAMFKLDIETGLTGGESILYLGAASGTTVSHVADFAGPTYAIEFAPRPVRDLLEVATTRPNLIPLLCDARQPETYAHVVETDIEYLIQDVATRGQATVALRNRQFLAPDGKLILMIKARSEDVLSDPEDVFDTIISTLREGYIIQTRQRLDRFHDDHLAVVATPNM</sequence>
<reference key="1">
    <citation type="journal article" date="2006" name="BMC Genomics">
        <title>The genome of the square archaeon Haloquadratum walsbyi: life at the limits of water activity.</title>
        <authorList>
            <person name="Bolhuis H."/>
            <person name="Palm P."/>
            <person name="Wende A."/>
            <person name="Falb M."/>
            <person name="Rampp M."/>
            <person name="Rodriguez-Valera F."/>
            <person name="Pfeiffer F."/>
            <person name="Oesterhelt D."/>
        </authorList>
    </citation>
    <scope>NUCLEOTIDE SEQUENCE [LARGE SCALE GENOMIC DNA]</scope>
    <source>
        <strain>DSM 16790 / HBSQ001</strain>
    </source>
</reference>
<name>FLPA_HALWD</name>
<organism>
    <name type="scientific">Haloquadratum walsbyi (strain DSM 16790 / HBSQ001)</name>
    <dbReference type="NCBI Taxonomy" id="362976"/>
    <lineage>
        <taxon>Archaea</taxon>
        <taxon>Methanobacteriati</taxon>
        <taxon>Methanobacteriota</taxon>
        <taxon>Stenosarchaea group</taxon>
        <taxon>Halobacteria</taxon>
        <taxon>Halobacteriales</taxon>
        <taxon>Haloferacaceae</taxon>
        <taxon>Haloquadratum</taxon>
    </lineage>
</organism>
<keyword id="KW-0489">Methyltransferase</keyword>
<keyword id="KW-1185">Reference proteome</keyword>
<keyword id="KW-0694">RNA-binding</keyword>
<keyword id="KW-0698">rRNA processing</keyword>
<keyword id="KW-0808">Transferase</keyword>
<keyword id="KW-0819">tRNA processing</keyword>
<proteinExistence type="inferred from homology"/>